<gene>
    <name type="primary">MT3</name>
</gene>
<comment type="function">
    <text evidence="1">Binds heavy metals. Contains three zinc and three copper atoms per polypeptide chain and only a negligible amount of cadmium. Inhibits survival and neurite formation of cortical neurons in vitro (By similarity).</text>
</comment>
<comment type="tissue specificity">
    <text>Brain.</text>
</comment>
<comment type="similarity">
    <text evidence="5">Belongs to the metallothionein superfamily. Type 1 family.</text>
</comment>
<dbReference type="EMBL" id="U95969">
    <property type="protein sequence ID" value="AAC39165.1"/>
    <property type="molecule type" value="mRNA"/>
</dbReference>
<dbReference type="PIR" id="JC6521">
    <property type="entry name" value="JC6521"/>
</dbReference>
<dbReference type="RefSeq" id="NP_999221.1">
    <property type="nucleotide sequence ID" value="NM_214056.1"/>
</dbReference>
<dbReference type="SMR" id="P55944"/>
<dbReference type="FunCoup" id="P55944">
    <property type="interactions" value="501"/>
</dbReference>
<dbReference type="STRING" id="9823.ENSSSCP00000033186"/>
<dbReference type="PeptideAtlas" id="P55944"/>
<dbReference type="Ensembl" id="ENSSSCT00000027420.4">
    <property type="protein sequence ID" value="ENSSSCP00000026223.2"/>
    <property type="gene ID" value="ENSSSCG00000024305.4"/>
</dbReference>
<dbReference type="Ensembl" id="ENSSSCT00045056893.1">
    <property type="protein sequence ID" value="ENSSSCP00045039740.1"/>
    <property type="gene ID" value="ENSSSCG00045033264.1"/>
</dbReference>
<dbReference type="Ensembl" id="ENSSSCT00060099559.1">
    <property type="protein sequence ID" value="ENSSSCP00060043196.1"/>
    <property type="gene ID" value="ENSSSCG00060072837.1"/>
</dbReference>
<dbReference type="Ensembl" id="ENSSSCT00105064652">
    <property type="protein sequence ID" value="ENSSSCP00105046026"/>
    <property type="gene ID" value="ENSSSCG00105033900"/>
</dbReference>
<dbReference type="GeneID" id="397123"/>
<dbReference type="KEGG" id="ssc:397123"/>
<dbReference type="CTD" id="4504"/>
<dbReference type="VGNC" id="VGNC:107155">
    <property type="gene designation" value="MT3"/>
</dbReference>
<dbReference type="eggNOG" id="KOG4738">
    <property type="taxonomic scope" value="Eukaryota"/>
</dbReference>
<dbReference type="GeneTree" id="ENSGT00950000182967"/>
<dbReference type="InParanoid" id="P55944"/>
<dbReference type="OMA" id="CEDSCKC"/>
<dbReference type="Reactome" id="R-SSC-5661231">
    <property type="pathway name" value="Metallothioneins bind metals"/>
</dbReference>
<dbReference type="Proteomes" id="UP000008227">
    <property type="component" value="Chromosome 6"/>
</dbReference>
<dbReference type="Proteomes" id="UP000314985">
    <property type="component" value="Unplaced"/>
</dbReference>
<dbReference type="Proteomes" id="UP000694570">
    <property type="component" value="Unplaced"/>
</dbReference>
<dbReference type="Proteomes" id="UP000694571">
    <property type="component" value="Unplaced"/>
</dbReference>
<dbReference type="Proteomes" id="UP000694720">
    <property type="component" value="Unplaced"/>
</dbReference>
<dbReference type="Proteomes" id="UP000694722">
    <property type="component" value="Unplaced"/>
</dbReference>
<dbReference type="Proteomes" id="UP000694723">
    <property type="component" value="Unplaced"/>
</dbReference>
<dbReference type="Proteomes" id="UP000694724">
    <property type="component" value="Unplaced"/>
</dbReference>
<dbReference type="Proteomes" id="UP000694725">
    <property type="component" value="Unplaced"/>
</dbReference>
<dbReference type="Proteomes" id="UP000694726">
    <property type="component" value="Unplaced"/>
</dbReference>
<dbReference type="Proteomes" id="UP000694727">
    <property type="component" value="Unplaced"/>
</dbReference>
<dbReference type="Proteomes" id="UP000694728">
    <property type="component" value="Unplaced"/>
</dbReference>
<dbReference type="Bgee" id="ENSSSCG00000024305">
    <property type="expression patterns" value="Expressed in frontal cortex and 43 other cell types or tissues"/>
</dbReference>
<dbReference type="ExpressionAtlas" id="P55944">
    <property type="expression patterns" value="baseline and differential"/>
</dbReference>
<dbReference type="GO" id="GO:0005737">
    <property type="term" value="C:cytoplasm"/>
    <property type="evidence" value="ECO:0000318"/>
    <property type="project" value="GO_Central"/>
</dbReference>
<dbReference type="GO" id="GO:0016234">
    <property type="term" value="C:inclusion body"/>
    <property type="evidence" value="ECO:0000250"/>
    <property type="project" value="UniProtKB"/>
</dbReference>
<dbReference type="GO" id="GO:0005634">
    <property type="term" value="C:nucleus"/>
    <property type="evidence" value="ECO:0000250"/>
    <property type="project" value="UniProtKB"/>
</dbReference>
<dbReference type="GO" id="GO:0048471">
    <property type="term" value="C:perinuclear region of cytoplasm"/>
    <property type="evidence" value="ECO:0000250"/>
    <property type="project" value="UniProtKB"/>
</dbReference>
<dbReference type="GO" id="GO:0008021">
    <property type="term" value="C:synaptic vesicle"/>
    <property type="evidence" value="ECO:0000250"/>
    <property type="project" value="UniProtKB"/>
</dbReference>
<dbReference type="GO" id="GO:0046870">
    <property type="term" value="F:cadmium ion binding"/>
    <property type="evidence" value="ECO:0000250"/>
    <property type="project" value="UniProtKB"/>
</dbReference>
<dbReference type="GO" id="GO:0005507">
    <property type="term" value="F:copper ion binding"/>
    <property type="evidence" value="ECO:0000250"/>
    <property type="project" value="UniProtKB"/>
</dbReference>
<dbReference type="GO" id="GO:0046872">
    <property type="term" value="F:metal ion binding"/>
    <property type="evidence" value="ECO:0000318"/>
    <property type="project" value="GO_Central"/>
</dbReference>
<dbReference type="GO" id="GO:0140487">
    <property type="term" value="F:metal ion sequestering activity"/>
    <property type="evidence" value="ECO:0000250"/>
    <property type="project" value="UniProtKB"/>
</dbReference>
<dbReference type="GO" id="GO:0030295">
    <property type="term" value="F:protein kinase activator activity"/>
    <property type="evidence" value="ECO:0000250"/>
    <property type="project" value="UniProtKB"/>
</dbReference>
<dbReference type="GO" id="GO:0008270">
    <property type="term" value="F:zinc ion binding"/>
    <property type="evidence" value="ECO:0000250"/>
    <property type="project" value="UniProtKB"/>
</dbReference>
<dbReference type="GO" id="GO:0032148">
    <property type="term" value="P:activation of protein kinase B activity"/>
    <property type="evidence" value="ECO:0000250"/>
    <property type="project" value="UniProtKB"/>
</dbReference>
<dbReference type="GO" id="GO:1990748">
    <property type="term" value="P:cellular detoxification"/>
    <property type="evidence" value="ECO:0000250"/>
    <property type="project" value="UniProtKB"/>
</dbReference>
<dbReference type="GO" id="GO:0071276">
    <property type="term" value="P:cellular response to cadmium ion"/>
    <property type="evidence" value="ECO:0000318"/>
    <property type="project" value="GO_Central"/>
</dbReference>
<dbReference type="GO" id="GO:0071280">
    <property type="term" value="P:cellular response to copper ion"/>
    <property type="evidence" value="ECO:0000318"/>
    <property type="project" value="GO_Central"/>
</dbReference>
<dbReference type="GO" id="GO:0034614">
    <property type="term" value="P:cellular response to reactive oxygen species"/>
    <property type="evidence" value="ECO:0000250"/>
    <property type="project" value="UniProtKB"/>
</dbReference>
<dbReference type="GO" id="GO:0071294">
    <property type="term" value="P:cellular response to zinc ion"/>
    <property type="evidence" value="ECO:0000318"/>
    <property type="project" value="GO_Central"/>
</dbReference>
<dbReference type="GO" id="GO:0010273">
    <property type="term" value="P:detoxification of copper ion"/>
    <property type="evidence" value="ECO:0000318"/>
    <property type="project" value="GO_Central"/>
</dbReference>
<dbReference type="GO" id="GO:0006112">
    <property type="term" value="P:energy reserve metabolic process"/>
    <property type="evidence" value="ECO:0000250"/>
    <property type="project" value="UniProtKB"/>
</dbReference>
<dbReference type="GO" id="GO:0006882">
    <property type="term" value="P:intracellular zinc ion homeostasis"/>
    <property type="evidence" value="ECO:0000250"/>
    <property type="project" value="UniProtKB"/>
</dbReference>
<dbReference type="GO" id="GO:0033210">
    <property type="term" value="P:leptin-mediated signaling pathway"/>
    <property type="evidence" value="ECO:0000250"/>
    <property type="project" value="UniProtKB"/>
</dbReference>
<dbReference type="GO" id="GO:0030517">
    <property type="term" value="P:negative regulation of axon extension"/>
    <property type="evidence" value="ECO:0000250"/>
    <property type="project" value="UniProtKB"/>
</dbReference>
<dbReference type="GO" id="GO:0030308">
    <property type="term" value="P:negative regulation of cell growth"/>
    <property type="evidence" value="ECO:0000250"/>
    <property type="project" value="UniProtKB"/>
</dbReference>
<dbReference type="GO" id="GO:0043524">
    <property type="term" value="P:negative regulation of neuron apoptotic process"/>
    <property type="evidence" value="ECO:0000250"/>
    <property type="project" value="UniProtKB"/>
</dbReference>
<dbReference type="GO" id="GO:0051354">
    <property type="term" value="P:negative regulation of oxidoreductase activity"/>
    <property type="evidence" value="ECO:0000250"/>
    <property type="project" value="UniProtKB"/>
</dbReference>
<dbReference type="GO" id="GO:0045893">
    <property type="term" value="P:positive regulation of DNA-templated transcription"/>
    <property type="evidence" value="ECO:0000250"/>
    <property type="project" value="UniProtKB"/>
</dbReference>
<dbReference type="GO" id="GO:0070374">
    <property type="term" value="P:positive regulation of ERK1 and ERK2 cascade"/>
    <property type="evidence" value="ECO:0000250"/>
    <property type="project" value="UniProtKB"/>
</dbReference>
<dbReference type="GO" id="GO:0010628">
    <property type="term" value="P:positive regulation of gene expression"/>
    <property type="evidence" value="ECO:0000250"/>
    <property type="project" value="UniProtKB"/>
</dbReference>
<dbReference type="GO" id="GO:2000376">
    <property type="term" value="P:positive regulation of oxygen metabolic process"/>
    <property type="evidence" value="ECO:0000250"/>
    <property type="project" value="UniProtKB"/>
</dbReference>
<dbReference type="GO" id="GO:0001934">
    <property type="term" value="P:positive regulation of protein phosphorylation"/>
    <property type="evidence" value="ECO:0000250"/>
    <property type="project" value="UniProtKB"/>
</dbReference>
<dbReference type="GO" id="GO:0030949">
    <property type="term" value="P:positive regulation of vascular endothelial growth factor receptor signaling pathway"/>
    <property type="evidence" value="ECO:0000250"/>
    <property type="project" value="UniProtKB"/>
</dbReference>
<dbReference type="GO" id="GO:0050821">
    <property type="term" value="P:protein stabilization"/>
    <property type="evidence" value="ECO:0000250"/>
    <property type="project" value="UniProtKB"/>
</dbReference>
<dbReference type="GO" id="GO:0032095">
    <property type="term" value="P:regulation of response to food"/>
    <property type="evidence" value="ECO:0000250"/>
    <property type="project" value="UniProtKB"/>
</dbReference>
<dbReference type="GO" id="GO:0019430">
    <property type="term" value="P:removal of superoxide radicals"/>
    <property type="evidence" value="ECO:0000250"/>
    <property type="project" value="UniProtKB"/>
</dbReference>
<dbReference type="GO" id="GO:0001666">
    <property type="term" value="P:response to hypoxia"/>
    <property type="evidence" value="ECO:0000250"/>
    <property type="project" value="UniProtKB"/>
</dbReference>
<dbReference type="GO" id="GO:0006829">
    <property type="term" value="P:zinc ion transport"/>
    <property type="evidence" value="ECO:0000250"/>
    <property type="project" value="UniProtKB"/>
</dbReference>
<dbReference type="FunFam" id="4.10.10.10:FF:000001">
    <property type="entry name" value="Metallothionein"/>
    <property type="match status" value="1"/>
</dbReference>
<dbReference type="Gene3D" id="4.10.10.10">
    <property type="entry name" value="Metallothionein Isoform II"/>
    <property type="match status" value="1"/>
</dbReference>
<dbReference type="InterPro" id="IPR017854">
    <property type="entry name" value="Metalthion_dom_sf"/>
</dbReference>
<dbReference type="InterPro" id="IPR023587">
    <property type="entry name" value="Metalthion_dom_sf_vert"/>
</dbReference>
<dbReference type="InterPro" id="IPR000006">
    <property type="entry name" value="Metalthion_vert"/>
</dbReference>
<dbReference type="InterPro" id="IPR018064">
    <property type="entry name" value="Metalthion_vert_metal_BS"/>
</dbReference>
<dbReference type="PANTHER" id="PTHR23299">
    <property type="entry name" value="METALLOTHIONEIN"/>
    <property type="match status" value="1"/>
</dbReference>
<dbReference type="PANTHER" id="PTHR23299:SF18">
    <property type="entry name" value="METALLOTHIONEIN-3"/>
    <property type="match status" value="1"/>
</dbReference>
<dbReference type="Pfam" id="PF00131">
    <property type="entry name" value="Metallothio"/>
    <property type="match status" value="1"/>
</dbReference>
<dbReference type="PRINTS" id="PR00860">
    <property type="entry name" value="MTVERTEBRATE"/>
</dbReference>
<dbReference type="SUPFAM" id="SSF57868">
    <property type="entry name" value="Metallothionein"/>
    <property type="match status" value="1"/>
</dbReference>
<dbReference type="PROSITE" id="PS00203">
    <property type="entry name" value="METALLOTHIONEIN_VRT"/>
    <property type="match status" value="1"/>
</dbReference>
<organism>
    <name type="scientific">Sus scrofa</name>
    <name type="common">Pig</name>
    <dbReference type="NCBI Taxonomy" id="9823"/>
    <lineage>
        <taxon>Eukaryota</taxon>
        <taxon>Metazoa</taxon>
        <taxon>Chordata</taxon>
        <taxon>Craniata</taxon>
        <taxon>Vertebrata</taxon>
        <taxon>Euteleostomi</taxon>
        <taxon>Mammalia</taxon>
        <taxon>Eutheria</taxon>
        <taxon>Laurasiatheria</taxon>
        <taxon>Artiodactyla</taxon>
        <taxon>Suina</taxon>
        <taxon>Suidae</taxon>
        <taxon>Sus</taxon>
    </lineage>
</organism>
<reference key="1">
    <citation type="journal article" date="1996" name="Comp. Biochem. Physiol.">
        <title>Identification and characterization of metallothionein III (growth inhibitory factor) from porcine brain.</title>
        <authorList>
            <person name="Chen C.-F."/>
            <person name="Wang S.-H."/>
            <person name="Lin L.-Y."/>
        </authorList>
    </citation>
    <scope>NUCLEOTIDE SEQUENCE [MRNA]</scope>
    <source>
        <tissue>Brain</tissue>
    </source>
</reference>
<reference key="2">
    <citation type="journal article" date="1997" name="Gene">
        <title>Cloning of porcine neuron growth inhibitory factor (metallothionein III) cDNA and expression of the gene in Saccharomyces cerevisiae.</title>
        <authorList>
            <person name="Wang S.-H."/>
            <person name="Chang C.-Y."/>
            <person name="Chen C.-F."/>
            <person name="Tam M.F."/>
            <person name="Shih Y.H."/>
            <person name="Lin L.-Y."/>
        </authorList>
    </citation>
    <scope>NUCLEOTIDE SEQUENCE [MRNA]</scope>
</reference>
<protein>
    <recommendedName>
        <fullName>Metallothionein-3</fullName>
        <shortName>MT-3</shortName>
    </recommendedName>
    <alternativeName>
        <fullName>Growth inhibitory factor</fullName>
        <shortName>GIF</shortName>
    </alternativeName>
    <alternativeName>
        <fullName>Metallothionein-III</fullName>
        <shortName>MT-III</shortName>
    </alternativeName>
</protein>
<accession>P55944</accession>
<sequence length="68" mass="6927">MDPETCPCPTGGSCTCAGSCKCEGCKCTSCKKSCCSCCPAECEKCAKDCVCKGGEGAEAEEEKCSCCQ</sequence>
<proteinExistence type="evidence at transcript level"/>
<name>MT3_PIG</name>
<feature type="chain" id="PRO_0000197252" description="Metallothionein-3">
    <location>
        <begin position="1"/>
        <end position="68"/>
    </location>
</feature>
<feature type="region of interest" description="Beta">
    <location>
        <begin position="1"/>
        <end position="30"/>
    </location>
</feature>
<feature type="region of interest" description="Alpha">
    <location>
        <begin position="31"/>
        <end position="68"/>
    </location>
</feature>
<feature type="binding site" evidence="2">
    <location>
        <position position="6"/>
    </location>
    <ligand>
        <name>a divalent metal cation</name>
        <dbReference type="ChEBI" id="CHEBI:60240"/>
        <label>1</label>
        <note>in cluster B</note>
    </ligand>
</feature>
<feature type="binding site" evidence="2">
    <location>
        <position position="8"/>
    </location>
    <ligand>
        <name>a divalent metal cation</name>
        <dbReference type="ChEBI" id="CHEBI:60240"/>
        <label>1</label>
        <note>in cluster B</note>
    </ligand>
</feature>
<feature type="binding site" evidence="2">
    <location>
        <position position="8"/>
    </location>
    <ligand>
        <name>a divalent metal cation</name>
        <dbReference type="ChEBI" id="CHEBI:60240"/>
        <label>2</label>
        <note>in cluster B</note>
    </ligand>
</feature>
<feature type="binding site" evidence="2">
    <location>
        <position position="14"/>
    </location>
    <ligand>
        <name>a divalent metal cation</name>
        <dbReference type="ChEBI" id="CHEBI:60240"/>
        <label>2</label>
        <note>in cluster B</note>
    </ligand>
</feature>
<feature type="binding site" evidence="2">
    <location>
        <position position="16"/>
    </location>
    <ligand>
        <name>a divalent metal cation</name>
        <dbReference type="ChEBI" id="CHEBI:60240"/>
        <label>2</label>
        <note>in cluster B</note>
    </ligand>
</feature>
<feature type="binding site" evidence="2">
    <location>
        <position position="16"/>
    </location>
    <ligand>
        <name>a divalent metal cation</name>
        <dbReference type="ChEBI" id="CHEBI:60240"/>
        <label>3</label>
        <note>in cluster B</note>
    </ligand>
</feature>
<feature type="binding site" evidence="2">
    <location>
        <position position="20"/>
    </location>
    <ligand>
        <name>a divalent metal cation</name>
        <dbReference type="ChEBI" id="CHEBI:60240"/>
        <label>3</label>
        <note>in cluster B</note>
    </ligand>
</feature>
<feature type="binding site" evidence="2">
    <location>
        <position position="22"/>
    </location>
    <ligand>
        <name>a divalent metal cation</name>
        <dbReference type="ChEBI" id="CHEBI:60240"/>
        <label>1</label>
        <note>in cluster B</note>
    </ligand>
</feature>
<feature type="binding site" evidence="2">
    <location>
        <position position="25"/>
    </location>
    <ligand>
        <name>a divalent metal cation</name>
        <dbReference type="ChEBI" id="CHEBI:60240"/>
        <label>1</label>
        <note>in cluster B</note>
    </ligand>
</feature>
<feature type="binding site" evidence="2">
    <location>
        <position position="25"/>
    </location>
    <ligand>
        <name>a divalent metal cation</name>
        <dbReference type="ChEBI" id="CHEBI:60240"/>
        <label>3</label>
        <note>in cluster B</note>
    </ligand>
</feature>
<feature type="binding site" evidence="2">
    <location>
        <position position="27"/>
    </location>
    <ligand>
        <name>a divalent metal cation</name>
        <dbReference type="ChEBI" id="CHEBI:60240"/>
        <label>2</label>
        <note>in cluster B</note>
    </ligand>
</feature>
<feature type="binding site" evidence="2">
    <location>
        <position position="30"/>
    </location>
    <ligand>
        <name>a divalent metal cation</name>
        <dbReference type="ChEBI" id="CHEBI:60240"/>
        <label>3</label>
        <note>in cluster B</note>
    </ligand>
</feature>
<feature type="binding site" evidence="2">
    <location>
        <position position="34"/>
    </location>
    <ligand>
        <name>a divalent metal cation</name>
        <dbReference type="ChEBI" id="CHEBI:60240"/>
        <label>4</label>
        <note>in cluster A</note>
    </ligand>
</feature>
<feature type="binding site" evidence="2">
    <location>
        <position position="35"/>
    </location>
    <ligand>
        <name>a divalent metal cation</name>
        <dbReference type="ChEBI" id="CHEBI:60240"/>
        <label>4</label>
        <note>in cluster A</note>
    </ligand>
</feature>
<feature type="binding site" evidence="2">
    <location>
        <position position="35"/>
    </location>
    <ligand>
        <name>a divalent metal cation</name>
        <dbReference type="ChEBI" id="CHEBI:60240"/>
        <label>5</label>
        <note>in cluster A</note>
    </ligand>
</feature>
<feature type="binding site" evidence="2">
    <location>
        <position position="37"/>
    </location>
    <ligand>
        <name>a divalent metal cation</name>
        <dbReference type="ChEBI" id="CHEBI:60240"/>
        <label>5</label>
        <note>in cluster A</note>
    </ligand>
</feature>
<feature type="binding site" evidence="2">
    <location>
        <position position="38"/>
    </location>
    <ligand>
        <name>a divalent metal cation</name>
        <dbReference type="ChEBI" id="CHEBI:60240"/>
        <label>5</label>
        <note>in cluster A</note>
    </ligand>
</feature>
<feature type="binding site" evidence="2">
    <location>
        <position position="38"/>
    </location>
    <ligand>
        <name>a divalent metal cation</name>
        <dbReference type="ChEBI" id="CHEBI:60240"/>
        <label>6</label>
        <note>in cluster A</note>
    </ligand>
</feature>
<feature type="binding site" evidence="2">
    <location>
        <position position="42"/>
    </location>
    <ligand>
        <name>a divalent metal cation</name>
        <dbReference type="ChEBI" id="CHEBI:60240"/>
        <label>6</label>
        <note>in cluster A</note>
    </ligand>
</feature>
<feature type="binding site" evidence="2">
    <location>
        <position position="45"/>
    </location>
    <ligand>
        <name>a divalent metal cation</name>
        <dbReference type="ChEBI" id="CHEBI:60240"/>
        <label>4</label>
        <note>in cluster A</note>
    </ligand>
</feature>
<feature type="binding site" evidence="2">
    <location>
        <position position="45"/>
    </location>
    <ligand>
        <name>a divalent metal cation</name>
        <dbReference type="ChEBI" id="CHEBI:60240"/>
        <label>6</label>
        <note>in cluster A</note>
    </ligand>
</feature>
<feature type="binding site" evidence="2">
    <location>
        <position position="49"/>
    </location>
    <ligand>
        <name>a divalent metal cation</name>
        <dbReference type="ChEBI" id="CHEBI:60240"/>
        <label>4</label>
        <note>in cluster A</note>
    </ligand>
</feature>
<feature type="binding site" evidence="2">
    <location>
        <position position="51"/>
    </location>
    <ligand>
        <name>a divalent metal cation</name>
        <dbReference type="ChEBI" id="CHEBI:60240"/>
        <label>5</label>
        <note>in cluster A</note>
    </ligand>
</feature>
<feature type="binding site" evidence="2">
    <location>
        <position position="51"/>
    </location>
    <ligand>
        <name>a divalent metal cation</name>
        <dbReference type="ChEBI" id="CHEBI:60240"/>
        <label>7</label>
        <note>in cluster A</note>
    </ligand>
</feature>
<feature type="binding site" evidence="2">
    <location>
        <position position="64"/>
    </location>
    <ligand>
        <name>a divalent metal cation</name>
        <dbReference type="ChEBI" id="CHEBI:60240"/>
        <label>7</label>
        <note>in cluster A</note>
    </ligand>
</feature>
<feature type="binding site" evidence="2">
    <location>
        <position position="66"/>
    </location>
    <ligand>
        <name>a divalent metal cation</name>
        <dbReference type="ChEBI" id="CHEBI:60240"/>
        <label>7</label>
        <note>in cluster A</note>
    </ligand>
</feature>
<feature type="binding site" evidence="2">
    <location>
        <position position="67"/>
    </location>
    <ligand>
        <name>a divalent metal cation</name>
        <dbReference type="ChEBI" id="CHEBI:60240"/>
        <label>6</label>
        <note>in cluster A</note>
    </ligand>
</feature>
<feature type="binding site" evidence="2">
    <location>
        <position position="67"/>
    </location>
    <ligand>
        <name>a divalent metal cation</name>
        <dbReference type="ChEBI" id="CHEBI:60240"/>
        <label>7</label>
        <note>in cluster A</note>
    </ligand>
</feature>
<feature type="modified residue" description="N-acetylmethionine" evidence="4">
    <location>
        <position position="1"/>
    </location>
</feature>
<feature type="modified residue" description="Phosphoserine" evidence="3">
    <location>
        <position position="33"/>
    </location>
</feature>
<evidence type="ECO:0000250" key="1"/>
<evidence type="ECO:0000250" key="2">
    <source>
        <dbReference type="UniProtKB" id="P02795"/>
    </source>
</evidence>
<evidence type="ECO:0000250" key="3">
    <source>
        <dbReference type="UniProtKB" id="P28184"/>
    </source>
</evidence>
<evidence type="ECO:0000250" key="4">
    <source>
        <dbReference type="UniProtKB" id="P37359"/>
    </source>
</evidence>
<evidence type="ECO:0000305" key="5"/>
<keyword id="KW-0007">Acetylation</keyword>
<keyword id="KW-0186">Copper</keyword>
<keyword id="KW-0479">Metal-binding</keyword>
<keyword id="KW-0480">Metal-thiolate cluster</keyword>
<keyword id="KW-0597">Phosphoprotein</keyword>
<keyword id="KW-1185">Reference proteome</keyword>
<keyword id="KW-0862">Zinc</keyword>